<comment type="function">
    <text evidence="1">Required for endonucleolytic cleavage during polyadenylation-dependent pre-mRNA 3'-end formation.</text>
</comment>
<comment type="subunit">
    <text evidence="1">Component of a pre-mRNA cleavage factor complex. Interacts directly with PCF11.</text>
</comment>
<comment type="subcellular location">
    <subcellularLocation>
        <location evidence="1">Nucleus</location>
    </subcellularLocation>
</comment>
<comment type="similarity">
    <text evidence="1">Belongs to the Clp1 family. Clp1 subfamily.</text>
</comment>
<comment type="caution">
    <text evidence="3">May lack the polyribonucleotide 5'-hydroxyl-kinase and polynucleotide 5'-hydroxyl-kinase activities that are characteristic of the human ortholog.</text>
</comment>
<name>CLP1_ASPOR</name>
<dbReference type="EMBL" id="BA000051">
    <property type="protein sequence ID" value="BAE60109.1"/>
    <property type="molecule type" value="Genomic_DNA"/>
</dbReference>
<dbReference type="SMR" id="Q2UEA6"/>
<dbReference type="STRING" id="510516.Q2UEA6"/>
<dbReference type="EnsemblFungi" id="BAE60109">
    <property type="protein sequence ID" value="BAE60109"/>
    <property type="gene ID" value="AO090026000698"/>
</dbReference>
<dbReference type="VEuPathDB" id="FungiDB:AO090026000698"/>
<dbReference type="HOGENOM" id="CLU_018195_3_1_1"/>
<dbReference type="OMA" id="VQYVNCH"/>
<dbReference type="Proteomes" id="UP000006564">
    <property type="component" value="Chromosome 3"/>
</dbReference>
<dbReference type="GO" id="GO:0005849">
    <property type="term" value="C:mRNA cleavage factor complex"/>
    <property type="evidence" value="ECO:0007669"/>
    <property type="project" value="UniProtKB-UniRule"/>
</dbReference>
<dbReference type="GO" id="GO:0005524">
    <property type="term" value="F:ATP binding"/>
    <property type="evidence" value="ECO:0007669"/>
    <property type="project" value="UniProtKB-UniRule"/>
</dbReference>
<dbReference type="GO" id="GO:0051731">
    <property type="term" value="F:polynucleotide 5'-hydroxyl-kinase activity"/>
    <property type="evidence" value="ECO:0007669"/>
    <property type="project" value="InterPro"/>
</dbReference>
<dbReference type="GO" id="GO:0031124">
    <property type="term" value="P:mRNA 3'-end processing"/>
    <property type="evidence" value="ECO:0007669"/>
    <property type="project" value="UniProtKB-UniRule"/>
</dbReference>
<dbReference type="GO" id="GO:0006388">
    <property type="term" value="P:tRNA splicing, via endonucleolytic cleavage and ligation"/>
    <property type="evidence" value="ECO:0007669"/>
    <property type="project" value="TreeGrafter"/>
</dbReference>
<dbReference type="FunFam" id="3.40.50.300:FF:002095">
    <property type="entry name" value="mRNA cleavage and polyadenylation factor clp1"/>
    <property type="match status" value="1"/>
</dbReference>
<dbReference type="FunFam" id="2.60.120.1030:FF:000001">
    <property type="entry name" value="Protein CLP1 homolog 5"/>
    <property type="match status" value="1"/>
</dbReference>
<dbReference type="Gene3D" id="2.60.120.1030">
    <property type="entry name" value="Clp1, DNA binding domain"/>
    <property type="match status" value="1"/>
</dbReference>
<dbReference type="Gene3D" id="3.40.50.300">
    <property type="entry name" value="P-loop containing nucleotide triphosphate hydrolases"/>
    <property type="match status" value="1"/>
</dbReference>
<dbReference type="Gene3D" id="2.40.30.330">
    <property type="entry name" value="Pre-mRNA cleavage complex subunit Clp1, C-terminal domain"/>
    <property type="match status" value="1"/>
</dbReference>
<dbReference type="HAMAP" id="MF_03035">
    <property type="entry name" value="Clp1"/>
    <property type="match status" value="1"/>
</dbReference>
<dbReference type="InterPro" id="IPR028606">
    <property type="entry name" value="Clp1"/>
</dbReference>
<dbReference type="InterPro" id="IPR045116">
    <property type="entry name" value="Clp1/Grc3"/>
</dbReference>
<dbReference type="InterPro" id="IPR010655">
    <property type="entry name" value="Clp1_C"/>
</dbReference>
<dbReference type="InterPro" id="IPR038238">
    <property type="entry name" value="Clp1_C_sf"/>
</dbReference>
<dbReference type="InterPro" id="IPR032324">
    <property type="entry name" value="Clp1_N"/>
</dbReference>
<dbReference type="InterPro" id="IPR038239">
    <property type="entry name" value="Clp1_N_sf"/>
</dbReference>
<dbReference type="InterPro" id="IPR032319">
    <property type="entry name" value="CLP1_P"/>
</dbReference>
<dbReference type="InterPro" id="IPR027417">
    <property type="entry name" value="P-loop_NTPase"/>
</dbReference>
<dbReference type="PANTHER" id="PTHR12755">
    <property type="entry name" value="CLEAVAGE/POLYADENYLATION FACTOR IA SUBUNIT CLP1P"/>
    <property type="match status" value="1"/>
</dbReference>
<dbReference type="PANTHER" id="PTHR12755:SF6">
    <property type="entry name" value="POLYRIBONUCLEOTIDE 5'-HYDROXYL-KINASE CLP1"/>
    <property type="match status" value="1"/>
</dbReference>
<dbReference type="Pfam" id="PF06807">
    <property type="entry name" value="Clp1"/>
    <property type="match status" value="1"/>
</dbReference>
<dbReference type="Pfam" id="PF16573">
    <property type="entry name" value="CLP1_N"/>
    <property type="match status" value="1"/>
</dbReference>
<dbReference type="Pfam" id="PF16575">
    <property type="entry name" value="CLP1_P"/>
    <property type="match status" value="1"/>
</dbReference>
<dbReference type="SUPFAM" id="SSF52540">
    <property type="entry name" value="P-loop containing nucleoside triphosphate hydrolases"/>
    <property type="match status" value="1"/>
</dbReference>
<sequence length="558" mass="58551">MSLPGLDLTQPSADNQFAPAPPTQVSLSKGSEWRFEVAFGTVIRVKLLAGTAELFGTELAPSQTYTFSGTKGAIYTWHGCTLEVGAGDTGPSVDGLAPGGLSGATPRGLGAGGCQSEYTAEETPMVEYANVHFALETMRQEAKATGKDGPRVLILGPENAGKTSVAKILTAYATKVERQPIVVNLDPTEGMLSVPGTLTATAFRTMMDVEEGWGSSPMSGPSAVPVKLPLVYFYPMQNPLEAEGSVYRPIVSRLALSVMGRMAEDEEARETGIIVDTPGALSQGKPGSLEMINHIVTEFSITTILVIGSERLYSLMMKNYDNKPTSSASAVASDERITVVKLSKSGGCVDRDAAFMKGVRESQIRTYFFGNPIPSTASAALSLSASSTTNVTLSPHAQQLDFNTLSIYNYTIASLEEDEDEYDPSQLGAGDSFLPGGGNDAEASQAQQDEPARATPLPGIVSSIESATPPVASNVPLKKVLPPAPSTLANSLIAITNAPTTASAAEVRDASIMGFLYVAEVDSEKGKIRALAPVGGRVPPRAIVWGKKWPGEVVGLVG</sequence>
<feature type="chain" id="PRO_0000375196" description="mRNA cleavage and polyadenylation factor clp1">
    <location>
        <begin position="1"/>
        <end position="558"/>
    </location>
</feature>
<feature type="region of interest" description="Disordered" evidence="2">
    <location>
        <begin position="1"/>
        <end position="25"/>
    </location>
</feature>
<feature type="region of interest" description="Disordered" evidence="2">
    <location>
        <begin position="418"/>
        <end position="455"/>
    </location>
</feature>
<feature type="binding site" evidence="1">
    <location>
        <position position="32"/>
    </location>
    <ligand>
        <name>ATP</name>
        <dbReference type="ChEBI" id="CHEBI:30616"/>
    </ligand>
</feature>
<feature type="binding site" evidence="1">
    <location>
        <position position="71"/>
    </location>
    <ligand>
        <name>ATP</name>
        <dbReference type="ChEBI" id="CHEBI:30616"/>
    </ligand>
</feature>
<feature type="binding site" evidence="1">
    <location>
        <begin position="159"/>
        <end position="164"/>
    </location>
    <ligand>
        <name>ATP</name>
        <dbReference type="ChEBI" id="CHEBI:30616"/>
    </ligand>
</feature>
<protein>
    <recommendedName>
        <fullName evidence="1">mRNA cleavage and polyadenylation factor clp1</fullName>
    </recommendedName>
</protein>
<evidence type="ECO:0000255" key="1">
    <source>
        <dbReference type="HAMAP-Rule" id="MF_03035"/>
    </source>
</evidence>
<evidence type="ECO:0000256" key="2">
    <source>
        <dbReference type="SAM" id="MobiDB-lite"/>
    </source>
</evidence>
<evidence type="ECO:0000305" key="3"/>
<proteinExistence type="inferred from homology"/>
<reference key="1">
    <citation type="journal article" date="2005" name="Nature">
        <title>Genome sequencing and analysis of Aspergillus oryzae.</title>
        <authorList>
            <person name="Machida M."/>
            <person name="Asai K."/>
            <person name="Sano M."/>
            <person name="Tanaka T."/>
            <person name="Kumagai T."/>
            <person name="Terai G."/>
            <person name="Kusumoto K."/>
            <person name="Arima T."/>
            <person name="Akita O."/>
            <person name="Kashiwagi Y."/>
            <person name="Abe K."/>
            <person name="Gomi K."/>
            <person name="Horiuchi H."/>
            <person name="Kitamoto K."/>
            <person name="Kobayashi T."/>
            <person name="Takeuchi M."/>
            <person name="Denning D.W."/>
            <person name="Galagan J.E."/>
            <person name="Nierman W.C."/>
            <person name="Yu J."/>
            <person name="Archer D.B."/>
            <person name="Bennett J.W."/>
            <person name="Bhatnagar D."/>
            <person name="Cleveland T.E."/>
            <person name="Fedorova N.D."/>
            <person name="Gotoh O."/>
            <person name="Horikawa H."/>
            <person name="Hosoyama A."/>
            <person name="Ichinomiya M."/>
            <person name="Igarashi R."/>
            <person name="Iwashita K."/>
            <person name="Juvvadi P.R."/>
            <person name="Kato M."/>
            <person name="Kato Y."/>
            <person name="Kin T."/>
            <person name="Kokubun A."/>
            <person name="Maeda H."/>
            <person name="Maeyama N."/>
            <person name="Maruyama J."/>
            <person name="Nagasaki H."/>
            <person name="Nakajima T."/>
            <person name="Oda K."/>
            <person name="Okada K."/>
            <person name="Paulsen I."/>
            <person name="Sakamoto K."/>
            <person name="Sawano T."/>
            <person name="Takahashi M."/>
            <person name="Takase K."/>
            <person name="Terabayashi Y."/>
            <person name="Wortman J.R."/>
            <person name="Yamada O."/>
            <person name="Yamagata Y."/>
            <person name="Anazawa H."/>
            <person name="Hata Y."/>
            <person name="Koide Y."/>
            <person name="Komori T."/>
            <person name="Koyama Y."/>
            <person name="Minetoki T."/>
            <person name="Suharnan S."/>
            <person name="Tanaka A."/>
            <person name="Isono K."/>
            <person name="Kuhara S."/>
            <person name="Ogasawara N."/>
            <person name="Kikuchi H."/>
        </authorList>
    </citation>
    <scope>NUCLEOTIDE SEQUENCE [LARGE SCALE GENOMIC DNA]</scope>
    <source>
        <strain>ATCC 42149 / RIB 40</strain>
    </source>
</reference>
<accession>Q2UEA6</accession>
<gene>
    <name type="primary">clp1</name>
    <name type="ORF">AO090026000698</name>
</gene>
<keyword id="KW-0067">ATP-binding</keyword>
<keyword id="KW-0507">mRNA processing</keyword>
<keyword id="KW-0547">Nucleotide-binding</keyword>
<keyword id="KW-0539">Nucleus</keyword>
<keyword id="KW-1185">Reference proteome</keyword>
<organism>
    <name type="scientific">Aspergillus oryzae (strain ATCC 42149 / RIB 40)</name>
    <name type="common">Yellow koji mold</name>
    <dbReference type="NCBI Taxonomy" id="510516"/>
    <lineage>
        <taxon>Eukaryota</taxon>
        <taxon>Fungi</taxon>
        <taxon>Dikarya</taxon>
        <taxon>Ascomycota</taxon>
        <taxon>Pezizomycotina</taxon>
        <taxon>Eurotiomycetes</taxon>
        <taxon>Eurotiomycetidae</taxon>
        <taxon>Eurotiales</taxon>
        <taxon>Aspergillaceae</taxon>
        <taxon>Aspergillus</taxon>
        <taxon>Aspergillus subgen. Circumdati</taxon>
    </lineage>
</organism>